<proteinExistence type="inferred from homology"/>
<dbReference type="EMBL" id="BA000033">
    <property type="protein sequence ID" value="BAB96074.1"/>
    <property type="molecule type" value="Genomic_DNA"/>
</dbReference>
<dbReference type="RefSeq" id="WP_000634589.1">
    <property type="nucleotide sequence ID" value="NC_003923.1"/>
</dbReference>
<dbReference type="SMR" id="Q7A065"/>
<dbReference type="KEGG" id="sam:MW2209"/>
<dbReference type="HOGENOM" id="CLU_093757_3_1_9"/>
<dbReference type="GO" id="GO:0005737">
    <property type="term" value="C:cytoplasm"/>
    <property type="evidence" value="ECO:0007669"/>
    <property type="project" value="UniProtKB-SubCell"/>
</dbReference>
<dbReference type="GO" id="GO:0016151">
    <property type="term" value="F:nickel cation binding"/>
    <property type="evidence" value="ECO:0007669"/>
    <property type="project" value="UniProtKB-UniRule"/>
</dbReference>
<dbReference type="GO" id="GO:0051082">
    <property type="term" value="F:unfolded protein binding"/>
    <property type="evidence" value="ECO:0007669"/>
    <property type="project" value="UniProtKB-UniRule"/>
</dbReference>
<dbReference type="GO" id="GO:0006457">
    <property type="term" value="P:protein folding"/>
    <property type="evidence" value="ECO:0007669"/>
    <property type="project" value="InterPro"/>
</dbReference>
<dbReference type="GO" id="GO:0065003">
    <property type="term" value="P:protein-containing complex assembly"/>
    <property type="evidence" value="ECO:0007669"/>
    <property type="project" value="InterPro"/>
</dbReference>
<dbReference type="GO" id="GO:0019627">
    <property type="term" value="P:urea metabolic process"/>
    <property type="evidence" value="ECO:0007669"/>
    <property type="project" value="InterPro"/>
</dbReference>
<dbReference type="CDD" id="cd00571">
    <property type="entry name" value="UreE"/>
    <property type="match status" value="1"/>
</dbReference>
<dbReference type="Gene3D" id="2.60.260.20">
    <property type="entry name" value="Urease metallochaperone UreE, N-terminal domain"/>
    <property type="match status" value="1"/>
</dbReference>
<dbReference type="Gene3D" id="3.30.70.790">
    <property type="entry name" value="UreE, C-terminal domain"/>
    <property type="match status" value="1"/>
</dbReference>
<dbReference type="HAMAP" id="MF_00822">
    <property type="entry name" value="UreE"/>
    <property type="match status" value="1"/>
</dbReference>
<dbReference type="InterPro" id="IPR012406">
    <property type="entry name" value="UreE"/>
</dbReference>
<dbReference type="InterPro" id="IPR007864">
    <property type="entry name" value="UreE_C_dom"/>
</dbReference>
<dbReference type="InterPro" id="IPR004029">
    <property type="entry name" value="UreE_N"/>
</dbReference>
<dbReference type="InterPro" id="IPR036118">
    <property type="entry name" value="UreE_N_sf"/>
</dbReference>
<dbReference type="NCBIfam" id="NF009755">
    <property type="entry name" value="PRK13261.2-1"/>
    <property type="match status" value="1"/>
</dbReference>
<dbReference type="Pfam" id="PF05194">
    <property type="entry name" value="UreE_C"/>
    <property type="match status" value="1"/>
</dbReference>
<dbReference type="Pfam" id="PF02814">
    <property type="entry name" value="UreE_N"/>
    <property type="match status" value="1"/>
</dbReference>
<dbReference type="PIRSF" id="PIRSF036402">
    <property type="entry name" value="Ureas_acces_UreE"/>
    <property type="match status" value="1"/>
</dbReference>
<dbReference type="SMART" id="SM00988">
    <property type="entry name" value="UreE_N"/>
    <property type="match status" value="1"/>
</dbReference>
<dbReference type="SUPFAM" id="SSF69737">
    <property type="entry name" value="Urease metallochaperone UreE, C-terminal domain"/>
    <property type="match status" value="1"/>
</dbReference>
<dbReference type="SUPFAM" id="SSF69287">
    <property type="entry name" value="Urease metallochaperone UreE, N-terminal domain"/>
    <property type="match status" value="1"/>
</dbReference>
<gene>
    <name evidence="1" type="primary">ureE</name>
    <name type="ordered locus">MW2209</name>
</gene>
<sequence>MIVEEIQGNIANLSNSEKQKHVEKVYLENSDLVKRIQRVVTDHGTEIGIRLKQPIDLQYGDILYADDHNMIIVDVNSEDLLVIQPRTLQEMGDIAHQLGNRHLPAQFTETEMLVQYDYLVEDLLKSLGIPYVREDRKVNKAFRHIGHSHD</sequence>
<protein>
    <recommendedName>
        <fullName evidence="1">Urease accessory protein UreE</fullName>
    </recommendedName>
</protein>
<reference key="1">
    <citation type="journal article" date="2002" name="Lancet">
        <title>Genome and virulence determinants of high virulence community-acquired MRSA.</title>
        <authorList>
            <person name="Baba T."/>
            <person name="Takeuchi F."/>
            <person name="Kuroda M."/>
            <person name="Yuzawa H."/>
            <person name="Aoki K."/>
            <person name="Oguchi A."/>
            <person name="Nagai Y."/>
            <person name="Iwama N."/>
            <person name="Asano K."/>
            <person name="Naimi T."/>
            <person name="Kuroda H."/>
            <person name="Cui L."/>
            <person name="Yamamoto K."/>
            <person name="Hiramatsu K."/>
        </authorList>
    </citation>
    <scope>NUCLEOTIDE SEQUENCE [LARGE SCALE GENOMIC DNA]</scope>
    <source>
        <strain>MW2</strain>
    </source>
</reference>
<name>UREE_STAAW</name>
<feature type="chain" id="PRO_0000223441" description="Urease accessory protein UreE">
    <location>
        <begin position="1"/>
        <end position="150"/>
    </location>
</feature>
<accession>Q7A065</accession>
<comment type="function">
    <text evidence="1">Involved in urease metallocenter assembly. Binds nickel. Probably functions as a nickel donor during metallocenter assembly.</text>
</comment>
<comment type="subcellular location">
    <subcellularLocation>
        <location evidence="1">Cytoplasm</location>
    </subcellularLocation>
</comment>
<comment type="similarity">
    <text evidence="1">Belongs to the UreE family.</text>
</comment>
<evidence type="ECO:0000255" key="1">
    <source>
        <dbReference type="HAMAP-Rule" id="MF_00822"/>
    </source>
</evidence>
<keyword id="KW-0143">Chaperone</keyword>
<keyword id="KW-0963">Cytoplasm</keyword>
<keyword id="KW-0533">Nickel</keyword>
<keyword id="KW-0996">Nickel insertion</keyword>
<organism>
    <name type="scientific">Staphylococcus aureus (strain MW2)</name>
    <dbReference type="NCBI Taxonomy" id="196620"/>
    <lineage>
        <taxon>Bacteria</taxon>
        <taxon>Bacillati</taxon>
        <taxon>Bacillota</taxon>
        <taxon>Bacilli</taxon>
        <taxon>Bacillales</taxon>
        <taxon>Staphylococcaceae</taxon>
        <taxon>Staphylococcus</taxon>
    </lineage>
</organism>